<accession>A7HWR5</accession>
<protein>
    <recommendedName>
        <fullName evidence="1">Small ribosomal subunit protein uS19</fullName>
    </recommendedName>
    <alternativeName>
        <fullName evidence="2">30S ribosomal protein S19</fullName>
    </alternativeName>
</protein>
<reference key="1">
    <citation type="journal article" date="2011" name="Stand. Genomic Sci.">
        <title>Complete genome sequence of Parvibaculum lavamentivorans type strain (DS-1(T)).</title>
        <authorList>
            <person name="Schleheck D."/>
            <person name="Weiss M."/>
            <person name="Pitluck S."/>
            <person name="Bruce D."/>
            <person name="Land M.L."/>
            <person name="Han S."/>
            <person name="Saunders E."/>
            <person name="Tapia R."/>
            <person name="Detter C."/>
            <person name="Brettin T."/>
            <person name="Han J."/>
            <person name="Woyke T."/>
            <person name="Goodwin L."/>
            <person name="Pennacchio L."/>
            <person name="Nolan M."/>
            <person name="Cook A.M."/>
            <person name="Kjelleberg S."/>
            <person name="Thomas T."/>
        </authorList>
    </citation>
    <scope>NUCLEOTIDE SEQUENCE [LARGE SCALE GENOMIC DNA]</scope>
    <source>
        <strain>DS-1 / DSM 13023 / NCIMB 13966</strain>
    </source>
</reference>
<gene>
    <name evidence="1" type="primary">rpsS</name>
    <name type="ordered locus">Plav_2740</name>
</gene>
<name>RS19_PARL1</name>
<organism>
    <name type="scientific">Parvibaculum lavamentivorans (strain DS-1 / DSM 13023 / NCIMB 13966)</name>
    <dbReference type="NCBI Taxonomy" id="402881"/>
    <lineage>
        <taxon>Bacteria</taxon>
        <taxon>Pseudomonadati</taxon>
        <taxon>Pseudomonadota</taxon>
        <taxon>Alphaproteobacteria</taxon>
        <taxon>Hyphomicrobiales</taxon>
        <taxon>Parvibaculaceae</taxon>
        <taxon>Parvibaculum</taxon>
    </lineage>
</organism>
<evidence type="ECO:0000255" key="1">
    <source>
        <dbReference type="HAMAP-Rule" id="MF_00531"/>
    </source>
</evidence>
<evidence type="ECO:0000305" key="2"/>
<keyword id="KW-1185">Reference proteome</keyword>
<keyword id="KW-0687">Ribonucleoprotein</keyword>
<keyword id="KW-0689">Ribosomal protein</keyword>
<keyword id="KW-0694">RNA-binding</keyword>
<keyword id="KW-0699">rRNA-binding</keyword>
<comment type="function">
    <text evidence="1">Protein S19 forms a complex with S13 that binds strongly to the 16S ribosomal RNA.</text>
</comment>
<comment type="similarity">
    <text evidence="1">Belongs to the universal ribosomal protein uS19 family.</text>
</comment>
<sequence>MSRSLKKGPFVDGYLLKKAETTRSSGRKEVIKMWSRRSTILPQFVGLTFGVHNGKKHVPVLVTEDMVGHKFGEFSPTRTYFGHTSDKKAKKG</sequence>
<feature type="chain" id="PRO_1000072511" description="Small ribosomal subunit protein uS19">
    <location>
        <begin position="1"/>
        <end position="92"/>
    </location>
</feature>
<proteinExistence type="inferred from homology"/>
<dbReference type="EMBL" id="CP000774">
    <property type="protein sequence ID" value="ABS64348.1"/>
    <property type="molecule type" value="Genomic_DNA"/>
</dbReference>
<dbReference type="RefSeq" id="WP_012111662.1">
    <property type="nucleotide sequence ID" value="NC_009719.1"/>
</dbReference>
<dbReference type="SMR" id="A7HWR5"/>
<dbReference type="STRING" id="402881.Plav_2740"/>
<dbReference type="KEGG" id="pla:Plav_2740"/>
<dbReference type="eggNOG" id="COG0185">
    <property type="taxonomic scope" value="Bacteria"/>
</dbReference>
<dbReference type="HOGENOM" id="CLU_144911_0_1_5"/>
<dbReference type="OrthoDB" id="9797833at2"/>
<dbReference type="Proteomes" id="UP000006377">
    <property type="component" value="Chromosome"/>
</dbReference>
<dbReference type="GO" id="GO:0005737">
    <property type="term" value="C:cytoplasm"/>
    <property type="evidence" value="ECO:0007669"/>
    <property type="project" value="UniProtKB-ARBA"/>
</dbReference>
<dbReference type="GO" id="GO:0015935">
    <property type="term" value="C:small ribosomal subunit"/>
    <property type="evidence" value="ECO:0007669"/>
    <property type="project" value="InterPro"/>
</dbReference>
<dbReference type="GO" id="GO:0019843">
    <property type="term" value="F:rRNA binding"/>
    <property type="evidence" value="ECO:0007669"/>
    <property type="project" value="UniProtKB-UniRule"/>
</dbReference>
<dbReference type="GO" id="GO:0003735">
    <property type="term" value="F:structural constituent of ribosome"/>
    <property type="evidence" value="ECO:0007669"/>
    <property type="project" value="InterPro"/>
</dbReference>
<dbReference type="GO" id="GO:0000028">
    <property type="term" value="P:ribosomal small subunit assembly"/>
    <property type="evidence" value="ECO:0007669"/>
    <property type="project" value="TreeGrafter"/>
</dbReference>
<dbReference type="GO" id="GO:0006412">
    <property type="term" value="P:translation"/>
    <property type="evidence" value="ECO:0007669"/>
    <property type="project" value="UniProtKB-UniRule"/>
</dbReference>
<dbReference type="FunFam" id="3.30.860.10:FF:000001">
    <property type="entry name" value="30S ribosomal protein S19"/>
    <property type="match status" value="1"/>
</dbReference>
<dbReference type="Gene3D" id="3.30.860.10">
    <property type="entry name" value="30s Ribosomal Protein S19, Chain A"/>
    <property type="match status" value="1"/>
</dbReference>
<dbReference type="HAMAP" id="MF_00531">
    <property type="entry name" value="Ribosomal_uS19"/>
    <property type="match status" value="1"/>
</dbReference>
<dbReference type="InterPro" id="IPR002222">
    <property type="entry name" value="Ribosomal_uS19"/>
</dbReference>
<dbReference type="InterPro" id="IPR005732">
    <property type="entry name" value="Ribosomal_uS19_bac-type"/>
</dbReference>
<dbReference type="InterPro" id="IPR020934">
    <property type="entry name" value="Ribosomal_uS19_CS"/>
</dbReference>
<dbReference type="InterPro" id="IPR023575">
    <property type="entry name" value="Ribosomal_uS19_SF"/>
</dbReference>
<dbReference type="NCBIfam" id="TIGR01050">
    <property type="entry name" value="rpsS_bact"/>
    <property type="match status" value="1"/>
</dbReference>
<dbReference type="PANTHER" id="PTHR11880">
    <property type="entry name" value="RIBOSOMAL PROTEIN S19P FAMILY MEMBER"/>
    <property type="match status" value="1"/>
</dbReference>
<dbReference type="PANTHER" id="PTHR11880:SF8">
    <property type="entry name" value="SMALL RIBOSOMAL SUBUNIT PROTEIN US19M"/>
    <property type="match status" value="1"/>
</dbReference>
<dbReference type="Pfam" id="PF00203">
    <property type="entry name" value="Ribosomal_S19"/>
    <property type="match status" value="1"/>
</dbReference>
<dbReference type="PIRSF" id="PIRSF002144">
    <property type="entry name" value="Ribosomal_S19"/>
    <property type="match status" value="1"/>
</dbReference>
<dbReference type="PRINTS" id="PR00975">
    <property type="entry name" value="RIBOSOMALS19"/>
</dbReference>
<dbReference type="SUPFAM" id="SSF54570">
    <property type="entry name" value="Ribosomal protein S19"/>
    <property type="match status" value="1"/>
</dbReference>
<dbReference type="PROSITE" id="PS00323">
    <property type="entry name" value="RIBOSOMAL_S19"/>
    <property type="match status" value="1"/>
</dbReference>